<dbReference type="EC" id="4.1.1.65" evidence="3 4"/>
<dbReference type="EMBL" id="JH000454">
    <property type="status" value="NOT_ANNOTATED_CDS"/>
    <property type="molecule type" value="Genomic_DNA"/>
</dbReference>
<dbReference type="EMBL" id="M62722">
    <property type="protein sequence ID" value="AAA37015.1"/>
    <property type="molecule type" value="mRNA"/>
</dbReference>
<dbReference type="EMBL" id="X80455">
    <property type="protein sequence ID" value="CAA56630.1"/>
    <property type="status" value="ALT_INIT"/>
    <property type="molecule type" value="mRNA"/>
</dbReference>
<dbReference type="PIR" id="S72438">
    <property type="entry name" value="S72438"/>
</dbReference>
<dbReference type="RefSeq" id="XP_003504168.1">
    <property type="nucleotide sequence ID" value="XM_003504120.5"/>
</dbReference>
<dbReference type="RefSeq" id="XP_007620920.1">
    <property type="nucleotide sequence ID" value="XM_007622730.2"/>
</dbReference>
<dbReference type="RefSeq" id="XP_027243049.1">
    <property type="nucleotide sequence ID" value="XM_027387248.2"/>
</dbReference>
<dbReference type="SMR" id="P27465"/>
<dbReference type="PaxDb" id="10029-XP_007620919.1"/>
<dbReference type="Ensembl" id="ENSCGRT00001031548.1">
    <property type="protein sequence ID" value="ENSCGRP00001027301.1"/>
    <property type="gene ID" value="ENSCGRG00001024345.1"/>
</dbReference>
<dbReference type="GeneID" id="100689093"/>
<dbReference type="CTD" id="23761"/>
<dbReference type="eggNOG" id="KOG2420">
    <property type="taxonomic scope" value="Eukaryota"/>
</dbReference>
<dbReference type="GeneTree" id="ENSGT00390000013484"/>
<dbReference type="OrthoDB" id="4330at2759"/>
<dbReference type="UniPathway" id="UPA00558"/>
<dbReference type="Proteomes" id="UP000001075">
    <property type="component" value="Unassembled WGS sequence"/>
</dbReference>
<dbReference type="Proteomes" id="UP000694386">
    <property type="component" value="Unplaced"/>
</dbReference>
<dbReference type="Proteomes" id="UP001108280">
    <property type="component" value="Chromosome 1"/>
</dbReference>
<dbReference type="GO" id="GO:0005829">
    <property type="term" value="C:cytosol"/>
    <property type="evidence" value="ECO:0007669"/>
    <property type="project" value="Ensembl"/>
</dbReference>
<dbReference type="GO" id="GO:0005794">
    <property type="term" value="C:Golgi apparatus"/>
    <property type="evidence" value="ECO:0007669"/>
    <property type="project" value="Ensembl"/>
</dbReference>
<dbReference type="GO" id="GO:0005811">
    <property type="term" value="C:lipid droplet"/>
    <property type="evidence" value="ECO:0000250"/>
    <property type="project" value="UniProtKB"/>
</dbReference>
<dbReference type="GO" id="GO:0005743">
    <property type="term" value="C:mitochondrial inner membrane"/>
    <property type="evidence" value="ECO:0007669"/>
    <property type="project" value="UniProtKB-SubCell"/>
</dbReference>
<dbReference type="GO" id="GO:0005739">
    <property type="term" value="C:mitochondrion"/>
    <property type="evidence" value="ECO:0000250"/>
    <property type="project" value="UniProtKB"/>
</dbReference>
<dbReference type="GO" id="GO:0005634">
    <property type="term" value="C:nucleus"/>
    <property type="evidence" value="ECO:0007669"/>
    <property type="project" value="Ensembl"/>
</dbReference>
<dbReference type="GO" id="GO:0004609">
    <property type="term" value="F:phosphatidylserine decarboxylase activity"/>
    <property type="evidence" value="ECO:0000250"/>
    <property type="project" value="UniProtKB"/>
</dbReference>
<dbReference type="GO" id="GO:0140042">
    <property type="term" value="P:lipid droplet formation"/>
    <property type="evidence" value="ECO:0000250"/>
    <property type="project" value="UniProtKB"/>
</dbReference>
<dbReference type="GO" id="GO:0035694">
    <property type="term" value="P:mitochondrial protein catabolic process"/>
    <property type="evidence" value="ECO:0000250"/>
    <property type="project" value="UniProtKB"/>
</dbReference>
<dbReference type="GO" id="GO:0006646">
    <property type="term" value="P:phosphatidylethanolamine biosynthetic process"/>
    <property type="evidence" value="ECO:0000250"/>
    <property type="project" value="UniProtKB"/>
</dbReference>
<dbReference type="GO" id="GO:0016540">
    <property type="term" value="P:protein autoprocessing"/>
    <property type="evidence" value="ECO:0007669"/>
    <property type="project" value="UniProtKB-UniRule"/>
</dbReference>
<dbReference type="GO" id="GO:0010821">
    <property type="term" value="P:regulation of mitochondrion organization"/>
    <property type="evidence" value="ECO:0000250"/>
    <property type="project" value="UniProtKB"/>
</dbReference>
<dbReference type="HAMAP" id="MF_03208">
    <property type="entry name" value="PS_decarb_PSD_B_type1_euk"/>
    <property type="match status" value="1"/>
</dbReference>
<dbReference type="InterPro" id="IPR003817">
    <property type="entry name" value="PS_Dcarbxylase"/>
</dbReference>
<dbReference type="InterPro" id="IPR033177">
    <property type="entry name" value="PSD-B"/>
</dbReference>
<dbReference type="InterPro" id="IPR033661">
    <property type="entry name" value="PSD_type1_euk"/>
</dbReference>
<dbReference type="NCBIfam" id="TIGR00163">
    <property type="entry name" value="PS_decarb"/>
    <property type="match status" value="1"/>
</dbReference>
<dbReference type="PANTHER" id="PTHR10067">
    <property type="entry name" value="PHOSPHATIDYLSERINE DECARBOXYLASE"/>
    <property type="match status" value="1"/>
</dbReference>
<dbReference type="PANTHER" id="PTHR10067:SF6">
    <property type="entry name" value="PHOSPHATIDYLSERINE DECARBOXYLASE PROENZYME, MITOCHONDRIAL"/>
    <property type="match status" value="1"/>
</dbReference>
<dbReference type="Pfam" id="PF02666">
    <property type="entry name" value="PS_Dcarbxylase"/>
    <property type="match status" value="1"/>
</dbReference>
<keyword id="KW-0963">Cytoplasm</keyword>
<keyword id="KW-0210">Decarboxylase</keyword>
<keyword id="KW-0444">Lipid biosynthesis</keyword>
<keyword id="KW-0551">Lipid droplet</keyword>
<keyword id="KW-0443">Lipid metabolism</keyword>
<keyword id="KW-0456">Lyase</keyword>
<keyword id="KW-0472">Membrane</keyword>
<keyword id="KW-0496">Mitochondrion</keyword>
<keyword id="KW-0999">Mitochondrion inner membrane</keyword>
<keyword id="KW-0594">Phospholipid biosynthesis</keyword>
<keyword id="KW-1208">Phospholipid metabolism</keyword>
<keyword id="KW-0670">Pyruvate</keyword>
<keyword id="KW-1185">Reference proteome</keyword>
<keyword id="KW-0809">Transit peptide</keyword>
<keyword id="KW-0812">Transmembrane</keyword>
<keyword id="KW-1133">Transmembrane helix</keyword>
<keyword id="KW-0865">Zymogen</keyword>
<gene>
    <name evidence="3" type="primary">Pisd</name>
    <name type="synonym">PSSC</name>
</gene>
<organism>
    <name type="scientific">Cricetulus griseus</name>
    <name type="common">Chinese hamster</name>
    <name type="synonym">Cricetulus barabensis griseus</name>
    <dbReference type="NCBI Taxonomy" id="10029"/>
    <lineage>
        <taxon>Eukaryota</taxon>
        <taxon>Metazoa</taxon>
        <taxon>Chordata</taxon>
        <taxon>Craniata</taxon>
        <taxon>Vertebrata</taxon>
        <taxon>Euteleostomi</taxon>
        <taxon>Mammalia</taxon>
        <taxon>Eutheria</taxon>
        <taxon>Euarchontoglires</taxon>
        <taxon>Glires</taxon>
        <taxon>Rodentia</taxon>
        <taxon>Myomorpha</taxon>
        <taxon>Muroidea</taxon>
        <taxon>Cricetidae</taxon>
        <taxon>Cricetinae</taxon>
        <taxon>Cricetulus</taxon>
    </lineage>
</organism>
<comment type="function">
    <text evidence="1 3 4">Catalyzes the formation of phosphatidylethanolamine (PtdEtn) from phosphatidylserine (PtdSer). Plays a central role in phospholipid metabolism and in the interorganelle trafficking of phosphatidylserine. May be involved in lipid droplet biogenesis at the endoplasmic reticulum membrane (By similarity).</text>
</comment>
<comment type="catalytic activity">
    <reaction evidence="3 4">
        <text>a 1,2-diacyl-sn-glycero-3-phospho-L-serine + H(+) = a 1,2-diacyl-sn-glycero-3-phosphoethanolamine + CO2</text>
        <dbReference type="Rhea" id="RHEA:20828"/>
        <dbReference type="ChEBI" id="CHEBI:15378"/>
        <dbReference type="ChEBI" id="CHEBI:16526"/>
        <dbReference type="ChEBI" id="CHEBI:57262"/>
        <dbReference type="ChEBI" id="CHEBI:64612"/>
        <dbReference type="EC" id="4.1.1.65"/>
    </reaction>
    <physiologicalReaction direction="left-to-right" evidence="7">
        <dbReference type="Rhea" id="RHEA:20829"/>
    </physiologicalReaction>
</comment>
<comment type="cofactor">
    <cofactor evidence="3">
        <name>pyruvate</name>
        <dbReference type="ChEBI" id="CHEBI:15361"/>
    </cofactor>
    <text evidence="3">Binds 1 pyruvoyl group covalently per subunit.</text>
</comment>
<comment type="pathway">
    <text evidence="7">Phospholipid metabolism; phosphatidylethanolamine biosynthesis.</text>
</comment>
<comment type="subunit">
    <text evidence="3 8">Heterodimer of a large membrane-associated beta subunit and a small pyruvoyl-containing alpha subunit.</text>
</comment>
<comment type="subcellular location">
    <molecule>Phosphatidylserine decarboxylase beta chain</molecule>
    <subcellularLocation>
        <location evidence="3 8">Mitochondrion inner membrane</location>
        <topology evidence="3">Single-pass membrane protein</topology>
        <orientation evidence="3">Intermembrane side</orientation>
    </subcellularLocation>
</comment>
<comment type="subcellular location">
    <molecule>Phosphatidylserine decarboxylase alpha chain</molecule>
    <subcellularLocation>
        <location evidence="3 8">Mitochondrion inner membrane</location>
        <topology evidence="3">Peripheral membrane protein</topology>
        <orientation evidence="3">Intermembrane side</orientation>
    </subcellularLocation>
    <subcellularLocation>
        <location evidence="2">Cytoplasm</location>
    </subcellularLocation>
    <text evidence="3">Anchored to the mitochondrial inner membrane through its interaction with the integral membrane beta chain.</text>
</comment>
<comment type="subcellular location">
    <subcellularLocation>
        <location evidence="2">Mitochondrion inner membrane</location>
    </subcellularLocation>
    <subcellularLocation>
        <location evidence="2">Lipid droplet</location>
    </subcellularLocation>
    <text evidence="2">Predominantly localizes to lipid droplets in lipid-replete conditions, and to mitochondria in lipid-deplete conditions.</text>
</comment>
<comment type="PTM">
    <text evidence="3">Is synthesized initially as an inactive proenzyme. Formation of the active enzyme involves a self-maturation process in which the active site pyruvoyl group is generated from an internal serine residue via an autocatalytic post-translational modification. Two non-identical subunits are generated from the proenzyme in this reaction, and the pyruvate is formed at the N-terminus of the alpha chain, which is derived from the carboxyl end of the proenzyme. The autoendoproteolytic cleavage occurs by a canonical serine protease mechanism, in which the side chain hydroxyl group of the serine supplies its oxygen atom to form the C-terminus of the beta chain, while the remainder of the serine residue undergoes an oxidative deamination to produce ammonia and the pyruvoyl prosthetic group on the alpha chain. During this reaction, the Ser that is part of the protease active site of the proenzyme becomes the pyruvoyl prosthetic group, which constitutes an essential element of the active site of the mature decarboxylase.</text>
</comment>
<comment type="similarity">
    <text evidence="3">Belongs to the phosphatidylserine decarboxylase family. PSD-B subfamily. Eukaryotic type I sub-subfamily.</text>
</comment>
<comment type="sequence caution" evidence="6">
    <conflict type="erroneous initiation">
        <sequence resource="EMBL-CDS" id="CAA56630"/>
    </conflict>
</comment>
<name>PISD_CRIGR</name>
<feature type="transit peptide" description="Mitochondrion" evidence="3">
    <location>
        <begin position="1"/>
        <end position="52"/>
    </location>
</feature>
<feature type="chain" id="PRO_0000435570" description="Phosphatidylserine decarboxylase proenzyme, mitochondrial">
    <location>
        <begin position="53"/>
        <end position="409"/>
    </location>
</feature>
<feature type="chain" id="PRO_0000029833" description="Phosphatidylserine decarboxylase beta chain" evidence="3">
    <location>
        <begin position="53"/>
        <end position="377"/>
    </location>
</feature>
<feature type="chain" id="PRO_0000029834" description="Phosphatidylserine decarboxylase alpha chain" evidence="3">
    <location>
        <begin position="378"/>
        <end position="409"/>
    </location>
</feature>
<feature type="topological domain" description="Mitochondrial matrix" evidence="3">
    <location>
        <begin position="53"/>
        <end position="63"/>
    </location>
</feature>
<feature type="transmembrane region" description="Helical" evidence="3">
    <location>
        <begin position="64"/>
        <end position="82"/>
    </location>
</feature>
<feature type="topological domain" description="Mitochondrial intermembrane" evidence="3">
    <location>
        <begin position="83"/>
        <end position="409"/>
    </location>
</feature>
<feature type="active site" description="Charge relay system; for autoendoproteolytic cleavage activity" evidence="3">
    <location>
        <position position="191"/>
    </location>
</feature>
<feature type="active site" description="Charge relay system; for autoendoproteolytic cleavage activity" evidence="3">
    <location>
        <position position="267"/>
    </location>
</feature>
<feature type="active site" description="Charge relay system; for autoendoproteolytic cleavage activity" evidence="3">
    <location>
        <position position="378"/>
    </location>
</feature>
<feature type="active site" description="Schiff-base intermediate with substrate; via pyruvic acid; for decarboxylase activity" evidence="3">
    <location>
        <position position="378"/>
    </location>
</feature>
<feature type="site" description="Cleavage (non-hydrolytic); by autocatalysis" evidence="3 8">
    <location>
        <begin position="377"/>
        <end position="378"/>
    </location>
</feature>
<feature type="modified residue" description="Pyruvic acid (Ser); by autocatalysis" evidence="3">
    <location>
        <position position="378"/>
    </location>
</feature>
<feature type="mutagenesis site" description="Blocks the formation of alpha chain." evidence="5">
    <original>S</original>
    <variation>A</variation>
    <location>
        <position position="378"/>
    </location>
</feature>
<protein>
    <recommendedName>
        <fullName evidence="3">Phosphatidylserine decarboxylase proenzyme, mitochondrial</fullName>
        <ecNumber evidence="3 4">4.1.1.65</ecNumber>
    </recommendedName>
    <component>
        <recommendedName>
            <fullName evidence="3">Phosphatidylserine decarboxylase beta chain</fullName>
        </recommendedName>
    </component>
    <component>
        <recommendedName>
            <fullName evidence="3">Phosphatidylserine decarboxylase alpha chain</fullName>
        </recommendedName>
    </component>
</protein>
<proteinExistence type="evidence at protein level"/>
<reference key="1">
    <citation type="journal article" date="2011" name="Nat. Biotechnol.">
        <title>The genomic sequence of the Chinese hamster ovary (CHO)-K1 cell line.</title>
        <authorList>
            <person name="Xu X."/>
            <person name="Nagarajan H."/>
            <person name="Lewis N.E."/>
            <person name="Pan S."/>
            <person name="Cai Z."/>
            <person name="Liu X."/>
            <person name="Chen W."/>
            <person name="Xie M."/>
            <person name="Wang W."/>
            <person name="Hammond S."/>
            <person name="Andersen M.R."/>
            <person name="Neff N."/>
            <person name="Passarelli B."/>
            <person name="Koh W."/>
            <person name="Fan H.C."/>
            <person name="Wang J."/>
            <person name="Gui Y."/>
            <person name="Lee K.H."/>
            <person name="Betenbaugh M.J."/>
            <person name="Quake S.R."/>
            <person name="Famili I."/>
            <person name="Palsson B.O."/>
            <person name="Wang J."/>
        </authorList>
    </citation>
    <scope>NUCLEOTIDE SEQUENCE [LARGE SCALE GENOMIC DNA]</scope>
</reference>
<reference key="2">
    <citation type="journal article" date="1991" name="J. Biol. Chem.">
        <title>A cloned gene encoding phosphatidylserine decarboxylase complements the phosphatidylserine biosynthetic defect of a Chinese hamster ovary cell mutant.</title>
        <authorList>
            <person name="Kuge O."/>
            <person name="Nishijima M."/>
            <person name="Akamatsu Y."/>
        </authorList>
    </citation>
    <scope>NUCLEOTIDE SEQUENCE [MRNA] OF 40-409</scope>
    <scope>FUNCTION</scope>
    <scope>CATALYTIC ACTIVITY</scope>
    <scope>PATHWAY</scope>
</reference>
<reference key="3">
    <citation type="journal article" date="1996" name="Biochem. J.">
        <title>Post-translational processing of the phosphatidylserine decarboxylase gene product in Chinese hamster ovary cells.</title>
        <authorList>
            <person name="Kuge O."/>
            <person name="Saito K."/>
            <person name="Kojima M."/>
            <person name="Akamatsu Y."/>
            <person name="Nishijima M."/>
        </authorList>
    </citation>
    <scope>NUCLEOTIDE SEQUENCE [MRNA] OF 1-99</scope>
    <scope>SUBCELLULAR LOCATION</scope>
    <scope>MUTAGENESIS OF SER-378</scope>
    <scope>SUBUNIT</scope>
    <source>
        <strain>CHO-K1</strain>
    </source>
</reference>
<accession>P27465</accession>
<accession>Q64402</accession>
<sequence>MAASVCRPYVRSLPGVMPWRSSSCHYEYTAMHHFLGSFQKLPFEPFNTGARKIHTAPVRSLFLLRPVPILLATGGGYAGYRQYEKYRDQKLEKLGLEIPPKLASHWEVALYKSVPTRLLSRAWGRLNQVELPYWLRRPVYSLYIWTFGVNMTEAAVEDLHHYRNLSEFFRRKLKPQARPVCGLHSVISPSDGKILTFGQVKNCEVEQVKGVTYSLESFLGPRTYTEDLSFPPASSRDSFRNQLVTREGNELYHCVIYLAPGDYHCFHSPTDWTVSHRRHFPGSLMSVNPGMARWIKELFCHNERVVLSGDWKHGFFSLTAVGATNVGSIRIYFDQDLHTNSPRYSKGSYNDLSFVTHANKEGIPMRKGEHLGEFNLGSTIVLIFEAPKDFNFRLKAGQKIRFGEALGSL</sequence>
<evidence type="ECO:0000250" key="1">
    <source>
        <dbReference type="UniProtKB" id="A0A8H4BVL9"/>
    </source>
</evidence>
<evidence type="ECO:0000250" key="2">
    <source>
        <dbReference type="UniProtKB" id="Q9UG56"/>
    </source>
</evidence>
<evidence type="ECO:0000255" key="3">
    <source>
        <dbReference type="HAMAP-Rule" id="MF_03208"/>
    </source>
</evidence>
<evidence type="ECO:0000269" key="4">
    <source>
    </source>
</evidence>
<evidence type="ECO:0000269" key="5">
    <source>
    </source>
</evidence>
<evidence type="ECO:0000305" key="6"/>
<evidence type="ECO:0000305" key="7">
    <source>
    </source>
</evidence>
<evidence type="ECO:0000305" key="8">
    <source>
    </source>
</evidence>